<gene>
    <name type="ordered locus">Kole_0595</name>
</gene>
<protein>
    <recommendedName>
        <fullName evidence="1">UPF0597 protein Kole_0595</fullName>
    </recommendedName>
</protein>
<sequence length="422" mass="45081">MIRLTQYLQSGVKPALGCTEPGAIAFAVSRACKDLPEDEILESIEVKTSINIYKNGMYVVIPGTNGARGNKIAAALGAICGDPSLKLRALKSCNDSHIEKAKRMIASGKVKLSCLRDKPGVYIDVTVKTRNHAARCVIDGDHTAISLVARDGVIVFKGSQREREEPVFFEGEKFPIDEIIETVERIDAKDVDFIFEGVKMNLEIATYAMNEGISLCKPVKENNNSEEELAIRIKRFCAAASFARMAGVPLPVMSSGGSGNQGIVTILPVAITGKSYGKTREEIAKAIALSHLVLGYIKSRLGKVTPTCGAANAAGPAAAAGIVYMLNGSTEQISQAMSTVFSSTLGMICDGAKEACAYKVGFSGEVAYNSAMLALDKSCVAGPQGVVGKTIEETIENIREISTRTALELENTIIDILEKYNK</sequence>
<feature type="chain" id="PRO_1000216107" description="UPF0597 protein Kole_0595">
    <location>
        <begin position="1"/>
        <end position="422"/>
    </location>
</feature>
<accession>C5CEY4</accession>
<proteinExistence type="inferred from homology"/>
<evidence type="ECO:0000255" key="1">
    <source>
        <dbReference type="HAMAP-Rule" id="MF_01845"/>
    </source>
</evidence>
<reference key="1">
    <citation type="submission" date="2009-06" db="EMBL/GenBank/DDBJ databases">
        <title>Complete sequence of Thermotogales bacterium TBF 19.5.1.</title>
        <authorList>
            <consortium name="US DOE Joint Genome Institute"/>
            <person name="Lucas S."/>
            <person name="Copeland A."/>
            <person name="Lapidus A."/>
            <person name="Glavina del Rio T."/>
            <person name="Tice H."/>
            <person name="Bruce D."/>
            <person name="Goodwin L."/>
            <person name="Pitluck S."/>
            <person name="Chertkov O."/>
            <person name="Brettin T."/>
            <person name="Detter J.C."/>
            <person name="Han C."/>
            <person name="Schmutz J."/>
            <person name="Larimer F."/>
            <person name="Land M."/>
            <person name="Hauser L."/>
            <person name="Kyrpides N."/>
            <person name="Ovchinnikova G."/>
            <person name="Noll K."/>
        </authorList>
    </citation>
    <scope>NUCLEOTIDE SEQUENCE [LARGE SCALE GENOMIC DNA]</scope>
    <source>
        <strain>ATCC BAA-1733 / DSM 21960 / TBF 19.5.1</strain>
    </source>
</reference>
<comment type="similarity">
    <text evidence="1">Belongs to the UPF0597 family.</text>
</comment>
<name>Y595_KOSOT</name>
<organism>
    <name type="scientific">Kosmotoga olearia (strain ATCC BAA-1733 / DSM 21960 / TBF 19.5.1)</name>
    <dbReference type="NCBI Taxonomy" id="521045"/>
    <lineage>
        <taxon>Bacteria</taxon>
        <taxon>Thermotogati</taxon>
        <taxon>Thermotogota</taxon>
        <taxon>Thermotogae</taxon>
        <taxon>Kosmotogales</taxon>
        <taxon>Kosmotogaceae</taxon>
        <taxon>Kosmotoga</taxon>
    </lineage>
</organism>
<keyword id="KW-1185">Reference proteome</keyword>
<dbReference type="EMBL" id="CP001634">
    <property type="protein sequence ID" value="ACR79313.1"/>
    <property type="molecule type" value="Genomic_DNA"/>
</dbReference>
<dbReference type="RefSeq" id="WP_012745095.1">
    <property type="nucleotide sequence ID" value="NC_012785.1"/>
</dbReference>
<dbReference type="SMR" id="C5CEY4"/>
<dbReference type="STRING" id="521045.Kole_0595"/>
<dbReference type="KEGG" id="kol:Kole_0595"/>
<dbReference type="eggNOG" id="COG3681">
    <property type="taxonomic scope" value="Bacteria"/>
</dbReference>
<dbReference type="HOGENOM" id="CLU_051840_0_0_0"/>
<dbReference type="OrthoDB" id="41906at2"/>
<dbReference type="Proteomes" id="UP000002382">
    <property type="component" value="Chromosome"/>
</dbReference>
<dbReference type="GO" id="GO:0080146">
    <property type="term" value="F:L-cysteine desulfhydrase activity"/>
    <property type="evidence" value="ECO:0007669"/>
    <property type="project" value="TreeGrafter"/>
</dbReference>
<dbReference type="GO" id="GO:0019450">
    <property type="term" value="P:L-cysteine catabolic process to pyruvate"/>
    <property type="evidence" value="ECO:0007669"/>
    <property type="project" value="TreeGrafter"/>
</dbReference>
<dbReference type="HAMAP" id="MF_01845">
    <property type="entry name" value="UPF0597"/>
    <property type="match status" value="1"/>
</dbReference>
<dbReference type="InterPro" id="IPR005130">
    <property type="entry name" value="Ser_deHydtase-like_asu"/>
</dbReference>
<dbReference type="InterPro" id="IPR021144">
    <property type="entry name" value="UPF0597"/>
</dbReference>
<dbReference type="PANTHER" id="PTHR30501">
    <property type="entry name" value="UPF0597 PROTEIN YHAM"/>
    <property type="match status" value="1"/>
</dbReference>
<dbReference type="PANTHER" id="PTHR30501:SF2">
    <property type="entry name" value="UPF0597 PROTEIN YHAM"/>
    <property type="match status" value="1"/>
</dbReference>
<dbReference type="Pfam" id="PF03313">
    <property type="entry name" value="SDH_alpha"/>
    <property type="match status" value="1"/>
</dbReference>
<dbReference type="PIRSF" id="PIRSF006054">
    <property type="entry name" value="UCP006054"/>
    <property type="match status" value="1"/>
</dbReference>